<sequence length="2701" mass="316415">MAEEGAVAVCVRVRPLNSREESLGETAQVYWKTDNNVIYQVDGSKSFNFDRVFHGNETTKNVYEEIAAPIIDSAIQGYNGTIFAYGQTASGKTYTMMGSEDHLGVIPRAIHDIFQKIKKFPDREFLLRVSYMEIYNETITDLLCGTQKMKPLIIREDVNRNVYVADLTEEVVYTSEMALKWITKGEKSRHYGETKMNQRSSRSHTIFRMILESREKGEPSNCEGSVKVSHLNLVDLAGSERAAQTGAAGVRLKEGCNINRSLFILGQVIKKLSDGQVGGFINYRDSKLTRILQNSLGGNAKTRIICTITPVSFDETLTALQFASTAKYMKNTPYVNEVSTDEALLKRYRKEIMDLKKQLEEVSLETRAQAMEKDQLAQLLEEKDLLQKVQNEKIENLTRMLVTSSSLTLQQELKAKRKRRVTWCLGKINKMKNSNYADQFNIPTNITTKTHKLSINLLREIDESVCSESDVFSNTLDTLSEIEWNPATKLLNQENIESELNSLRADYDNLVLDYEQLRTEKEEMELKLKEKNDLDEFEALERKTKKDQEMQLIHEISNLKNLVKHAEVYNQDLENELSSKVELLREKEDQIKKLQEYIDSQKLENIKMDLSYSLESIEDPKQMKQTLFDAETVALDAKRESAFLRSENLELKEKMKELATTYKQMENDIQLYQSQLEAKKKMQVDLEKELQSAFNEITKLTSLIDGKVPKDLLCNLELEGKITDLQKELNKEVEENEALREEVILLSELKSLPSEVERLRKEIQDKSEELHIITSEKDKLFSEVVHKESRVQGLLEEIGKTKDDLATTQSNYKSTDQEFQNFKTLHMDFEQKYKMVLEENERMNQEIVNLSKEAQKFDSSLGALKTELSYKTQELQEKTREVQERLNEMEQLKEQLENRDSTLQTVEREKTLITEKLQQTLEEVKTLTQEKDDLKQLQESLQIERDQLKSDIHDTVNMNIDTQEQLRNALESLKQHQETINTLKSKISEEVSRNLHMEENTGETKDEFQQKMVGIDKKQDLEAKNTQTLTADVKDNEIIEQQRKIFSLIQEKNELQQMLESVIAEKEQLKTDLKENIEMTIENQEELRLLGDELKKQQEIVAQEKNHAIKKEGELSRTCDRLAEVEEKLKEKSQQLQEKQQQLLNVQEEMSEMQKKINEIENLKNELKNKELTLEHMETERLELAQKLNENYEEVKSITKERKVLKELQKSFETERDHLRGYIREIEATGLQTKEELKIAHIHLKEHQETIDELRRSVSEKTAQIINTQDLEKSHTKLQEEIPVLHEEQELLPNVKEVSETQETMNELELLTEQSTTKDSTTLARIEMERLRLNEKFQESQEEIKSLTKERDNLKTIKEALEVKHDQLKEHIRETLAKIQESQSKQEQSLNMKEKDNETTKIVSEMEQFKPKDSALLRIEIEMLGLSKRLQESHDEMKSVAKEKDDLQRLQEVLQSESDQLKENIKEIVAKHLETEEELKVAHCCLKEQEETINELRVNLSEKETEISTIQKQLEAINDKLQNKIQEIYEKEEQFNIKQISEVQEKVNELKQFKEHRKAKDSALQSIESKMLELTNRLQESQEEIQIMIKEKEEMKRVQEALQIERDQLKENTKEIVAKMKESQEKEYQFLKMTAVNETQEKMCEIEHLKEQFETQKLNLENIETENIRLTQILHENLEEMRSVTKERDDLRSVEETLKVERDQLKENLRETITRDLEKQEELKIVHMHLKEHQETIDKLRGIVSEKTNEISNMQKDLEHSNDALKAQDLKIQEELRIAHMHLKEQQETIDKLRGIVSEKTDKLSNMQKDLENSNAKLQEKIQELKANEHQLITLKKDVNETQKKVSEMEQLKKQIKDQSLTLSKLEIENLNLAQKLHENLEEMKSVMKERDNLRRVEETLKLERDQLKESLQETKARDLEIQQELKTARMLSKEHKETVDKLREKISEKTIQISDIQKDLDKSKDELQKKIQELQKKELQLLRVKEDVNMSHKKINEMEQLKKQFEAQNLSMQSVRMDNFQLTKKLHESLEEIRIVAKERDELRRIKESLKMERDQFIATLREMIARDRQNHQVKPEKRLLSDGQQHLTESLREKCSRIKELLKRYSEMDDHYECLNRLSLDLEKEIEFQKELSMRVKANLSLPYLQTKHIEKLFTANQRCSMEFHRIMKKLKYVLSYVTKIKEEQHESINKFEMDFIDEVEKQKELLIKIQHLQQDCDVPSRELRDLKLNQNMDLHIEEILKDFSESEFPSIKTEFQQVLSNRKEMTQFLEEWLNTRFDIEKLKNGIQKENDRICQVNNFFNNRIIAIMNESTEFEERSATISKEWEQDLKSLKEKNEKLFKNYQTLKTSLASGAQVNPTTQDNKNPHVTSRATQLTTEKIRELENSLHEAKESAMHKESKIIKMQKELEVTNDIIAKLQAKVHESNKCLEKTKETIQVLQDKVALGAKPYKEEIEDLKMKLVKIDLEKMKNAKEFEKEISATKATVEYQKEVIRLLRENLRRSQQAQDTSVISEHTDPQPSNKPLTCGGGSGIVQNTKALILKSEHIRLEKEISKLKQQNEQLIKQKNELLSNNQHLSNEVKTWKERTLKREAHKQVTCENSPKSPKVTGTASKKKQITPSQCKERNLQDPVPKESPKSCFFDSRSKSLPSPHPVRYFDNSSLGLCPEVQNAGAESVDSQPGPWHASSGKDVPECKTQ</sequence>
<proteinExistence type="evidence at protein level"/>
<keyword id="KW-0002">3D-structure</keyword>
<keyword id="KW-0025">Alternative splicing</keyword>
<keyword id="KW-0067">ATP-binding</keyword>
<keyword id="KW-0131">Cell cycle</keyword>
<keyword id="KW-0132">Cell division</keyword>
<keyword id="KW-0137">Centromere</keyword>
<keyword id="KW-0158">Chromosome</keyword>
<keyword id="KW-0175">Coiled coil</keyword>
<keyword id="KW-0963">Cytoplasm</keyword>
<keyword id="KW-0206">Cytoskeleton</keyword>
<keyword id="KW-0217">Developmental protein</keyword>
<keyword id="KW-0903">Direct protein sequencing</keyword>
<keyword id="KW-0225">Disease variant</keyword>
<keyword id="KW-0995">Kinetochore</keyword>
<keyword id="KW-0449">Lipoprotein</keyword>
<keyword id="KW-0488">Methylation</keyword>
<keyword id="KW-0493">Microtubule</keyword>
<keyword id="KW-0498">Mitosis</keyword>
<keyword id="KW-0505">Motor protein</keyword>
<keyword id="KW-0547">Nucleotide-binding</keyword>
<keyword id="KW-0597">Phosphoprotein</keyword>
<keyword id="KW-0636">Prenylation</keyword>
<keyword id="KW-0905">Primary microcephaly</keyword>
<keyword id="KW-1267">Proteomics identification</keyword>
<keyword id="KW-1185">Reference proteome</keyword>
<keyword id="KW-0832">Ubl conjugation</keyword>
<dbReference type="EMBL" id="Z15005">
    <property type="protein sequence ID" value="CAA78727.1"/>
    <property type="status" value="ALT_SEQ"/>
    <property type="molecule type" value="mRNA"/>
</dbReference>
<dbReference type="EMBL" id="AB209996">
    <property type="protein sequence ID" value="BAE06078.1"/>
    <property type="status" value="ALT_INIT"/>
    <property type="molecule type" value="mRNA"/>
</dbReference>
<dbReference type="EMBL" id="AC079919">
    <property type="status" value="NOT_ANNOTATED_CDS"/>
    <property type="molecule type" value="Genomic_DNA"/>
</dbReference>
<dbReference type="EMBL" id="CH471057">
    <property type="protein sequence ID" value="EAX06171.1"/>
    <property type="molecule type" value="Genomic_DNA"/>
</dbReference>
<dbReference type="EMBL" id="AK290362">
    <property type="protein sequence ID" value="BAF83051.1"/>
    <property type="molecule type" value="mRNA"/>
</dbReference>
<dbReference type="CCDS" id="CCDS34042.1">
    <molecule id="Q02224-1"/>
</dbReference>
<dbReference type="CCDS" id="CCDS68768.1">
    <molecule id="Q02224-3"/>
</dbReference>
<dbReference type="PIR" id="S28261">
    <property type="entry name" value="S28261"/>
</dbReference>
<dbReference type="RefSeq" id="NP_001273663.1">
    <molecule id="Q02224-3"/>
    <property type="nucleotide sequence ID" value="NM_001286734.2"/>
</dbReference>
<dbReference type="RefSeq" id="NP_001804.2">
    <molecule id="Q02224-1"/>
    <property type="nucleotide sequence ID" value="NM_001813.3"/>
</dbReference>
<dbReference type="PDB" id="1T5C">
    <property type="method" value="X-ray"/>
    <property type="resolution" value="2.50 A"/>
    <property type="chains" value="A/B=2-342"/>
</dbReference>
<dbReference type="PDB" id="5JVP">
    <property type="method" value="X-ray"/>
    <property type="resolution" value="2.10 A"/>
    <property type="chains" value="A/B/C/D/E/F=336-371"/>
</dbReference>
<dbReference type="PDB" id="6M4I">
    <property type="method" value="X-ray"/>
    <property type="resolution" value="1.90 A"/>
    <property type="chains" value="A/B=1-339"/>
</dbReference>
<dbReference type="PDB" id="8HFH">
    <property type="method" value="X-ray"/>
    <property type="resolution" value="1.80 A"/>
    <property type="chains" value="A=1-339"/>
</dbReference>
<dbReference type="PDB" id="8OWI">
    <property type="method" value="X-ray"/>
    <property type="resolution" value="2.14 A"/>
    <property type="chains" value="A/B=2452-2598"/>
</dbReference>
<dbReference type="PDB" id="8WHL">
    <property type="method" value="X-ray"/>
    <property type="resolution" value="3.20 A"/>
    <property type="chains" value="E/F/G/H=487-548"/>
</dbReference>
<dbReference type="PDBsum" id="1T5C"/>
<dbReference type="PDBsum" id="5JVP"/>
<dbReference type="PDBsum" id="6M4I"/>
<dbReference type="PDBsum" id="8HFH"/>
<dbReference type="PDBsum" id="8OWI"/>
<dbReference type="PDBsum" id="8WHL"/>
<dbReference type="SMR" id="Q02224"/>
<dbReference type="BioGRID" id="107491">
    <property type="interactions" value="84"/>
</dbReference>
<dbReference type="DIP" id="DIP-38902N"/>
<dbReference type="FunCoup" id="Q02224">
    <property type="interactions" value="800"/>
</dbReference>
<dbReference type="IntAct" id="Q02224">
    <property type="interactions" value="42"/>
</dbReference>
<dbReference type="MINT" id="Q02224"/>
<dbReference type="STRING" id="9606.ENSP00000265148"/>
<dbReference type="BindingDB" id="Q02224"/>
<dbReference type="ChEMBL" id="CHEMBL5870"/>
<dbReference type="DrugBank" id="DB06097">
    <property type="generic name" value="GSK-923295"/>
</dbReference>
<dbReference type="GlyGen" id="Q02224">
    <property type="glycosylation" value="1 site, 1 O-linked glycan (1 site)"/>
</dbReference>
<dbReference type="iPTMnet" id="Q02224"/>
<dbReference type="PhosphoSitePlus" id="Q02224"/>
<dbReference type="SwissPalm" id="Q02224"/>
<dbReference type="BioMuta" id="CENPE"/>
<dbReference type="DMDM" id="160358869"/>
<dbReference type="jPOST" id="Q02224"/>
<dbReference type="MassIVE" id="Q02224"/>
<dbReference type="PaxDb" id="9606-ENSP00000265148"/>
<dbReference type="PeptideAtlas" id="Q02224"/>
<dbReference type="ProteomicsDB" id="58063">
    <molecule id="Q02224-1"/>
</dbReference>
<dbReference type="ProteomicsDB" id="58065">
    <molecule id="Q02224-3"/>
</dbReference>
<dbReference type="Pumba" id="Q02224"/>
<dbReference type="Antibodypedia" id="26097">
    <property type="antibodies" value="239 antibodies from 31 providers"/>
</dbReference>
<dbReference type="DNASU" id="1062"/>
<dbReference type="Ensembl" id="ENST00000265148.9">
    <molecule id="Q02224-1"/>
    <property type="protein sequence ID" value="ENSP00000265148.3"/>
    <property type="gene ID" value="ENSG00000138778.14"/>
</dbReference>
<dbReference type="Ensembl" id="ENST00000380026.8">
    <molecule id="Q02224-3"/>
    <property type="protein sequence ID" value="ENSP00000369365.3"/>
    <property type="gene ID" value="ENSG00000138778.14"/>
</dbReference>
<dbReference type="GeneID" id="1062"/>
<dbReference type="KEGG" id="hsa:1062"/>
<dbReference type="MANE-Select" id="ENST00000265148.9">
    <property type="protein sequence ID" value="ENSP00000265148.3"/>
    <property type="RefSeq nucleotide sequence ID" value="NM_001813.3"/>
    <property type="RefSeq protein sequence ID" value="NP_001804.2"/>
</dbReference>
<dbReference type="UCSC" id="uc003hxb.1">
    <molecule id="Q02224-1"/>
    <property type="organism name" value="human"/>
</dbReference>
<dbReference type="AGR" id="HGNC:1856"/>
<dbReference type="CTD" id="1062"/>
<dbReference type="DisGeNET" id="1062"/>
<dbReference type="GeneCards" id="CENPE"/>
<dbReference type="HGNC" id="HGNC:1856">
    <property type="gene designation" value="CENPE"/>
</dbReference>
<dbReference type="HPA" id="ENSG00000138778">
    <property type="expression patterns" value="Tissue enhanced (bone marrow, lymphoid tissue)"/>
</dbReference>
<dbReference type="MalaCards" id="CENPE"/>
<dbReference type="MIM" id="117143">
    <property type="type" value="gene"/>
</dbReference>
<dbReference type="MIM" id="616051">
    <property type="type" value="phenotype"/>
</dbReference>
<dbReference type="neXtProt" id="NX_Q02224"/>
<dbReference type="OpenTargets" id="ENSG00000138778"/>
<dbReference type="Orphanet" id="2512">
    <property type="disease" value="Autosomal recessive primary microcephaly"/>
</dbReference>
<dbReference type="Orphanet" id="808">
    <property type="disease" value="Seckel syndrome"/>
</dbReference>
<dbReference type="PharmGKB" id="PA26400"/>
<dbReference type="VEuPathDB" id="HostDB:ENSG00000138778"/>
<dbReference type="eggNOG" id="KOG0242">
    <property type="taxonomic scope" value="Eukaryota"/>
</dbReference>
<dbReference type="GeneTree" id="ENSGT00940000160597"/>
<dbReference type="HOGENOM" id="CLU_000713_1_0_1"/>
<dbReference type="InParanoid" id="Q02224"/>
<dbReference type="OMA" id="ENECFSA"/>
<dbReference type="OrthoDB" id="21525at2759"/>
<dbReference type="PAN-GO" id="Q02224">
    <property type="GO annotations" value="5 GO annotations based on evolutionary models"/>
</dbReference>
<dbReference type="PhylomeDB" id="Q02224"/>
<dbReference type="TreeFam" id="TF330343"/>
<dbReference type="PathwayCommons" id="Q02224"/>
<dbReference type="Reactome" id="R-HSA-141444">
    <property type="pathway name" value="Amplification of signal from unattached kinetochores via a MAD2 inhibitory signal"/>
</dbReference>
<dbReference type="Reactome" id="R-HSA-2132295">
    <property type="pathway name" value="MHC class II antigen presentation"/>
</dbReference>
<dbReference type="Reactome" id="R-HSA-2467813">
    <property type="pathway name" value="Separation of Sister Chromatids"/>
</dbReference>
<dbReference type="Reactome" id="R-HSA-2500257">
    <property type="pathway name" value="Resolution of Sister Chromatid Cohesion"/>
</dbReference>
<dbReference type="Reactome" id="R-HSA-5663220">
    <property type="pathway name" value="RHO GTPases Activate Formins"/>
</dbReference>
<dbReference type="Reactome" id="R-HSA-6811434">
    <property type="pathway name" value="COPI-dependent Golgi-to-ER retrograde traffic"/>
</dbReference>
<dbReference type="Reactome" id="R-HSA-68877">
    <property type="pathway name" value="Mitotic Prometaphase"/>
</dbReference>
<dbReference type="Reactome" id="R-HSA-9648025">
    <property type="pathway name" value="EML4 and NUDC in mitotic spindle formation"/>
</dbReference>
<dbReference type="Reactome" id="R-HSA-983189">
    <property type="pathway name" value="Kinesins"/>
</dbReference>
<dbReference type="SignaLink" id="Q02224"/>
<dbReference type="SIGNOR" id="Q02224"/>
<dbReference type="BioGRID-ORCS" id="1062">
    <property type="hits" value="673 hits in 1136 CRISPR screens"/>
</dbReference>
<dbReference type="ChiTaRS" id="CENPE">
    <property type="organism name" value="human"/>
</dbReference>
<dbReference type="EvolutionaryTrace" id="Q02224"/>
<dbReference type="GeneWiki" id="Centromere_protein_E"/>
<dbReference type="GenomeRNAi" id="1062"/>
<dbReference type="Pharos" id="Q02224">
    <property type="development level" value="Tchem"/>
</dbReference>
<dbReference type="PRO" id="PR:Q02224"/>
<dbReference type="Proteomes" id="UP000005640">
    <property type="component" value="Chromosome 4"/>
</dbReference>
<dbReference type="RNAct" id="Q02224">
    <property type="molecule type" value="protein"/>
</dbReference>
<dbReference type="Bgee" id="ENSG00000138778">
    <property type="expression patterns" value="Expressed in oocyte and 118 other cell types or tissues"/>
</dbReference>
<dbReference type="ExpressionAtlas" id="Q02224">
    <property type="expression patterns" value="baseline and differential"/>
</dbReference>
<dbReference type="GO" id="GO:0005694">
    <property type="term" value="C:chromosome"/>
    <property type="evidence" value="ECO:0000314"/>
    <property type="project" value="UniProtKB"/>
</dbReference>
<dbReference type="GO" id="GO:0000775">
    <property type="term" value="C:chromosome, centromeric region"/>
    <property type="evidence" value="ECO:0000314"/>
    <property type="project" value="UniProtKB"/>
</dbReference>
<dbReference type="GO" id="GO:0000779">
    <property type="term" value="C:condensed chromosome, centromeric region"/>
    <property type="evidence" value="ECO:0000314"/>
    <property type="project" value="UniProtKB"/>
</dbReference>
<dbReference type="GO" id="GO:0005829">
    <property type="term" value="C:cytosol"/>
    <property type="evidence" value="ECO:0000304"/>
    <property type="project" value="Reactome"/>
</dbReference>
<dbReference type="GO" id="GO:0045171">
    <property type="term" value="C:intercellular bridge"/>
    <property type="evidence" value="ECO:0000314"/>
    <property type="project" value="HPA"/>
</dbReference>
<dbReference type="GO" id="GO:0043231">
    <property type="term" value="C:intracellular membrane-bounded organelle"/>
    <property type="evidence" value="ECO:0000314"/>
    <property type="project" value="HPA"/>
</dbReference>
<dbReference type="GO" id="GO:0000776">
    <property type="term" value="C:kinetochore"/>
    <property type="evidence" value="ECO:0000314"/>
    <property type="project" value="UniProtKB"/>
</dbReference>
<dbReference type="GO" id="GO:0005828">
    <property type="term" value="C:kinetochore microtubule"/>
    <property type="evidence" value="ECO:0000314"/>
    <property type="project" value="UniProtKB"/>
</dbReference>
<dbReference type="GO" id="GO:0016020">
    <property type="term" value="C:membrane"/>
    <property type="evidence" value="ECO:0007005"/>
    <property type="project" value="UniProtKB"/>
</dbReference>
<dbReference type="GO" id="GO:0005874">
    <property type="term" value="C:microtubule"/>
    <property type="evidence" value="ECO:0000314"/>
    <property type="project" value="UniProtKB"/>
</dbReference>
<dbReference type="GO" id="GO:0015630">
    <property type="term" value="C:microtubule cytoskeleton"/>
    <property type="evidence" value="ECO:0000314"/>
    <property type="project" value="HPA"/>
</dbReference>
<dbReference type="GO" id="GO:0030496">
    <property type="term" value="C:midbody"/>
    <property type="evidence" value="ECO:0000314"/>
    <property type="project" value="UniProtKB"/>
</dbReference>
<dbReference type="GO" id="GO:0072686">
    <property type="term" value="C:mitotic spindle"/>
    <property type="evidence" value="ECO:0000314"/>
    <property type="project" value="HPA"/>
</dbReference>
<dbReference type="GO" id="GO:1990023">
    <property type="term" value="C:mitotic spindle midzone"/>
    <property type="evidence" value="ECO:0000314"/>
    <property type="project" value="UniProtKB"/>
</dbReference>
<dbReference type="GO" id="GO:0005634">
    <property type="term" value="C:nucleus"/>
    <property type="evidence" value="ECO:0000315"/>
    <property type="project" value="UniProtKB"/>
</dbReference>
<dbReference type="GO" id="GO:0051233">
    <property type="term" value="C:spindle midzone"/>
    <property type="evidence" value="ECO:0000314"/>
    <property type="project" value="UniProtKB"/>
</dbReference>
<dbReference type="GO" id="GO:0005524">
    <property type="term" value="F:ATP binding"/>
    <property type="evidence" value="ECO:0007669"/>
    <property type="project" value="UniProtKB-KW"/>
</dbReference>
<dbReference type="GO" id="GO:0043515">
    <property type="term" value="F:kinetochore binding"/>
    <property type="evidence" value="ECO:0000314"/>
    <property type="project" value="UniProtKB"/>
</dbReference>
<dbReference type="GO" id="GO:0008017">
    <property type="term" value="F:microtubule binding"/>
    <property type="evidence" value="ECO:0000314"/>
    <property type="project" value="UniProtKB"/>
</dbReference>
<dbReference type="GO" id="GO:0003777">
    <property type="term" value="F:microtubule motor activity"/>
    <property type="evidence" value="ECO:0000314"/>
    <property type="project" value="UniProtKB"/>
</dbReference>
<dbReference type="GO" id="GO:0051315">
    <property type="term" value="P:attachment of mitotic spindle microtubules to kinetochore"/>
    <property type="evidence" value="ECO:0000315"/>
    <property type="project" value="UniProtKB"/>
</dbReference>
<dbReference type="GO" id="GO:0051301">
    <property type="term" value="P:cell division"/>
    <property type="evidence" value="ECO:0007669"/>
    <property type="project" value="UniProtKB-KW"/>
</dbReference>
<dbReference type="GO" id="GO:0007059">
    <property type="term" value="P:chromosome segregation"/>
    <property type="evidence" value="ECO:0000315"/>
    <property type="project" value="UniProtKB"/>
</dbReference>
<dbReference type="GO" id="GO:0051382">
    <property type="term" value="P:kinetochore assembly"/>
    <property type="evidence" value="ECO:0000314"/>
    <property type="project" value="UniProtKB"/>
</dbReference>
<dbReference type="GO" id="GO:0099607">
    <property type="term" value="P:lateral attachment of mitotic spindle microtubules to kinetochore"/>
    <property type="evidence" value="ECO:0000315"/>
    <property type="project" value="UniProtKB"/>
</dbReference>
<dbReference type="GO" id="GO:0051310">
    <property type="term" value="P:metaphase chromosome alignment"/>
    <property type="evidence" value="ECO:0000315"/>
    <property type="project" value="UniProtKB"/>
</dbReference>
<dbReference type="GO" id="GO:0099606">
    <property type="term" value="P:microtubule plus-end directed mitotic chromosome migration"/>
    <property type="evidence" value="ECO:0000314"/>
    <property type="project" value="UniProtKB"/>
</dbReference>
<dbReference type="GO" id="GO:0007018">
    <property type="term" value="P:microtubule-based movement"/>
    <property type="evidence" value="ECO:0000318"/>
    <property type="project" value="GO_Central"/>
</dbReference>
<dbReference type="GO" id="GO:0000278">
    <property type="term" value="P:mitotic cell cycle"/>
    <property type="evidence" value="ECO:0000315"/>
    <property type="project" value="UniProtKB"/>
</dbReference>
<dbReference type="GO" id="GO:0007079">
    <property type="term" value="P:mitotic chromosome movement towards spindle pole"/>
    <property type="evidence" value="ECO:0000314"/>
    <property type="project" value="UniProtKB"/>
</dbReference>
<dbReference type="GO" id="GO:0007080">
    <property type="term" value="P:mitotic metaphase chromosome alignment"/>
    <property type="evidence" value="ECO:0000315"/>
    <property type="project" value="UniProtKB"/>
</dbReference>
<dbReference type="GO" id="GO:0007052">
    <property type="term" value="P:mitotic spindle organization"/>
    <property type="evidence" value="ECO:0000315"/>
    <property type="project" value="UniProtKB"/>
</dbReference>
<dbReference type="GO" id="GO:0045860">
    <property type="term" value="P:positive regulation of protein kinase activity"/>
    <property type="evidence" value="ECO:0000315"/>
    <property type="project" value="UniProtKB"/>
</dbReference>
<dbReference type="GO" id="GO:0030071">
    <property type="term" value="P:regulation of mitotic metaphase/anaphase transition"/>
    <property type="evidence" value="ECO:0000315"/>
    <property type="project" value="UniProtKB"/>
</dbReference>
<dbReference type="CDD" id="cd01374">
    <property type="entry name" value="KISc_CENP_E"/>
    <property type="match status" value="1"/>
</dbReference>
<dbReference type="FunFam" id="1.10.287.1490:FF:000006">
    <property type="entry name" value="Centromere protein E"/>
    <property type="match status" value="1"/>
</dbReference>
<dbReference type="FunFam" id="3.40.850.10:FF:000026">
    <property type="entry name" value="Centromere-associated protein E"/>
    <property type="match status" value="1"/>
</dbReference>
<dbReference type="Gene3D" id="1.10.287.1490">
    <property type="match status" value="1"/>
</dbReference>
<dbReference type="Gene3D" id="3.40.850.10">
    <property type="entry name" value="Kinesin motor domain"/>
    <property type="match status" value="1"/>
</dbReference>
<dbReference type="InterPro" id="IPR027640">
    <property type="entry name" value="Kinesin-like_fam"/>
</dbReference>
<dbReference type="InterPro" id="IPR019821">
    <property type="entry name" value="Kinesin_motor_CS"/>
</dbReference>
<dbReference type="InterPro" id="IPR001752">
    <property type="entry name" value="Kinesin_motor_dom"/>
</dbReference>
<dbReference type="InterPro" id="IPR036961">
    <property type="entry name" value="Kinesin_motor_dom_sf"/>
</dbReference>
<dbReference type="InterPro" id="IPR027417">
    <property type="entry name" value="P-loop_NTPase"/>
</dbReference>
<dbReference type="PANTHER" id="PTHR47968">
    <property type="entry name" value="CENTROMERE PROTEIN E"/>
    <property type="match status" value="1"/>
</dbReference>
<dbReference type="PANTHER" id="PTHR47968:SF75">
    <property type="entry name" value="CENTROMERE-ASSOCIATED PROTEIN E"/>
    <property type="match status" value="1"/>
</dbReference>
<dbReference type="Pfam" id="PF00225">
    <property type="entry name" value="Kinesin"/>
    <property type="match status" value="1"/>
</dbReference>
<dbReference type="PRINTS" id="PR00380">
    <property type="entry name" value="KINESINHEAVY"/>
</dbReference>
<dbReference type="SMART" id="SM00129">
    <property type="entry name" value="KISc"/>
    <property type="match status" value="1"/>
</dbReference>
<dbReference type="SUPFAM" id="SSF52540">
    <property type="entry name" value="P-loop containing nucleoside triphosphate hydrolases"/>
    <property type="match status" value="1"/>
</dbReference>
<dbReference type="PROSITE" id="PS00411">
    <property type="entry name" value="KINESIN_MOTOR_1"/>
    <property type="match status" value="1"/>
</dbReference>
<dbReference type="PROSITE" id="PS50067">
    <property type="entry name" value="KINESIN_MOTOR_2"/>
    <property type="match status" value="1"/>
</dbReference>
<evidence type="ECO:0000250" key="1"/>
<evidence type="ECO:0000250" key="2">
    <source>
        <dbReference type="UniProtKB" id="Q6RT24"/>
    </source>
</evidence>
<evidence type="ECO:0000255" key="3"/>
<evidence type="ECO:0000255" key="4">
    <source>
        <dbReference type="PROSITE-ProRule" id="PRU00283"/>
    </source>
</evidence>
<evidence type="ECO:0000256" key="5">
    <source>
        <dbReference type="SAM" id="MobiDB-lite"/>
    </source>
</evidence>
<evidence type="ECO:0000269" key="6">
    <source>
    </source>
</evidence>
<evidence type="ECO:0000269" key="7">
    <source>
    </source>
</evidence>
<evidence type="ECO:0000269" key="8">
    <source>
    </source>
</evidence>
<evidence type="ECO:0000269" key="9">
    <source>
    </source>
</evidence>
<evidence type="ECO:0000269" key="10">
    <source>
    </source>
</evidence>
<evidence type="ECO:0000269" key="11">
    <source>
    </source>
</evidence>
<evidence type="ECO:0000269" key="12">
    <source>
    </source>
</evidence>
<evidence type="ECO:0000269" key="13">
    <source>
    </source>
</evidence>
<evidence type="ECO:0000269" key="14">
    <source>
    </source>
</evidence>
<evidence type="ECO:0000269" key="15">
    <source>
    </source>
</evidence>
<evidence type="ECO:0000269" key="16">
    <source>
    </source>
</evidence>
<evidence type="ECO:0000269" key="17">
    <source>
    </source>
</evidence>
<evidence type="ECO:0000269" key="18">
    <source>
    </source>
</evidence>
<evidence type="ECO:0000269" key="19">
    <source>
    </source>
</evidence>
<evidence type="ECO:0000269" key="20">
    <source>
    </source>
</evidence>
<evidence type="ECO:0000269" key="21">
    <source>
    </source>
</evidence>
<evidence type="ECO:0000269" key="22">
    <source>
    </source>
</evidence>
<evidence type="ECO:0000269" key="23">
    <source>
    </source>
</evidence>
<evidence type="ECO:0000269" key="24">
    <source>
    </source>
</evidence>
<evidence type="ECO:0000303" key="25">
    <source>
    </source>
</evidence>
<evidence type="ECO:0000303" key="26">
    <source ref="2"/>
</evidence>
<evidence type="ECO:0000305" key="27"/>
<evidence type="ECO:0007744" key="28">
    <source>
    </source>
</evidence>
<evidence type="ECO:0007744" key="29">
    <source>
    </source>
</evidence>
<evidence type="ECO:0007829" key="30">
    <source>
        <dbReference type="PDB" id="1T5C"/>
    </source>
</evidence>
<evidence type="ECO:0007829" key="31">
    <source>
        <dbReference type="PDB" id="5JVP"/>
    </source>
</evidence>
<evidence type="ECO:0007829" key="32">
    <source>
        <dbReference type="PDB" id="6M4I"/>
    </source>
</evidence>
<evidence type="ECO:0007829" key="33">
    <source>
        <dbReference type="PDB" id="8HFH"/>
    </source>
</evidence>
<evidence type="ECO:0007829" key="34">
    <source>
        <dbReference type="PDB" id="8OWI"/>
    </source>
</evidence>
<reference key="1">
    <citation type="journal article" date="1992" name="Nature">
        <title>CENP-E is a putative kinetochore motor that accumulates just before mitosis.</title>
        <authorList>
            <person name="Yen T.J."/>
            <person name="Li G."/>
            <person name="Schaar B.T."/>
            <person name="Szilak I."/>
            <person name="Cleveland D.W."/>
        </authorList>
    </citation>
    <scope>NUCLEOTIDE SEQUENCE [MRNA] (ISOFORM 1)</scope>
    <scope>VARIANTS LEU-1535 AND MET-2090</scope>
</reference>
<reference key="2">
    <citation type="submission" date="2005-03" db="EMBL/GenBank/DDBJ databases">
        <title>Preparation of a set of expression-ready clones of mammalian long cDNAs encoding large proteins by the ORF trap cloning method.</title>
        <authorList>
            <person name="Nakajima D."/>
            <person name="Saito K."/>
            <person name="Yamakawa H."/>
            <person name="Kikuno R.F."/>
            <person name="Nakayama M."/>
            <person name="Ohara R."/>
            <person name="Okazaki N."/>
            <person name="Koga H."/>
            <person name="Nagase T."/>
            <person name="Ohara O."/>
        </authorList>
    </citation>
    <scope>NUCLEOTIDE SEQUENCE [MRNA] (ISOFORM 3)</scope>
</reference>
<reference key="3">
    <citation type="journal article" date="2005" name="Nature">
        <title>Generation and annotation of the DNA sequences of human chromosomes 2 and 4.</title>
        <authorList>
            <person name="Hillier L.W."/>
            <person name="Graves T.A."/>
            <person name="Fulton R.S."/>
            <person name="Fulton L.A."/>
            <person name="Pepin K.H."/>
            <person name="Minx P."/>
            <person name="Wagner-McPherson C."/>
            <person name="Layman D."/>
            <person name="Wylie K."/>
            <person name="Sekhon M."/>
            <person name="Becker M.C."/>
            <person name="Fewell G.A."/>
            <person name="Delehaunty K.D."/>
            <person name="Miner T.L."/>
            <person name="Nash W.E."/>
            <person name="Kremitzki C."/>
            <person name="Oddy L."/>
            <person name="Du H."/>
            <person name="Sun H."/>
            <person name="Bradshaw-Cordum H."/>
            <person name="Ali J."/>
            <person name="Carter J."/>
            <person name="Cordes M."/>
            <person name="Harris A."/>
            <person name="Isak A."/>
            <person name="van Brunt A."/>
            <person name="Nguyen C."/>
            <person name="Du F."/>
            <person name="Courtney L."/>
            <person name="Kalicki J."/>
            <person name="Ozersky P."/>
            <person name="Abbott S."/>
            <person name="Armstrong J."/>
            <person name="Belter E.A."/>
            <person name="Caruso L."/>
            <person name="Cedroni M."/>
            <person name="Cotton M."/>
            <person name="Davidson T."/>
            <person name="Desai A."/>
            <person name="Elliott G."/>
            <person name="Erb T."/>
            <person name="Fronick C."/>
            <person name="Gaige T."/>
            <person name="Haakenson W."/>
            <person name="Haglund K."/>
            <person name="Holmes A."/>
            <person name="Harkins R."/>
            <person name="Kim K."/>
            <person name="Kruchowski S.S."/>
            <person name="Strong C.M."/>
            <person name="Grewal N."/>
            <person name="Goyea E."/>
            <person name="Hou S."/>
            <person name="Levy A."/>
            <person name="Martinka S."/>
            <person name="Mead K."/>
            <person name="McLellan M.D."/>
            <person name="Meyer R."/>
            <person name="Randall-Maher J."/>
            <person name="Tomlinson C."/>
            <person name="Dauphin-Kohlberg S."/>
            <person name="Kozlowicz-Reilly A."/>
            <person name="Shah N."/>
            <person name="Swearengen-Shahid S."/>
            <person name="Snider J."/>
            <person name="Strong J.T."/>
            <person name="Thompson J."/>
            <person name="Yoakum M."/>
            <person name="Leonard S."/>
            <person name="Pearman C."/>
            <person name="Trani L."/>
            <person name="Radionenko M."/>
            <person name="Waligorski J.E."/>
            <person name="Wang C."/>
            <person name="Rock S.M."/>
            <person name="Tin-Wollam A.-M."/>
            <person name="Maupin R."/>
            <person name="Latreille P."/>
            <person name="Wendl M.C."/>
            <person name="Yang S.-P."/>
            <person name="Pohl C."/>
            <person name="Wallis J.W."/>
            <person name="Spieth J."/>
            <person name="Bieri T.A."/>
            <person name="Berkowicz N."/>
            <person name="Nelson J.O."/>
            <person name="Osborne J."/>
            <person name="Ding L."/>
            <person name="Meyer R."/>
            <person name="Sabo A."/>
            <person name="Shotland Y."/>
            <person name="Sinha P."/>
            <person name="Wohldmann P.E."/>
            <person name="Cook L.L."/>
            <person name="Hickenbotham M.T."/>
            <person name="Eldred J."/>
            <person name="Williams D."/>
            <person name="Jones T.A."/>
            <person name="She X."/>
            <person name="Ciccarelli F.D."/>
            <person name="Izaurralde E."/>
            <person name="Taylor J."/>
            <person name="Schmutz J."/>
            <person name="Myers R.M."/>
            <person name="Cox D.R."/>
            <person name="Huang X."/>
            <person name="McPherson J.D."/>
            <person name="Mardis E.R."/>
            <person name="Clifton S.W."/>
            <person name="Warren W.C."/>
            <person name="Chinwalla A.T."/>
            <person name="Eddy S.R."/>
            <person name="Marra M.A."/>
            <person name="Ovcharenko I."/>
            <person name="Furey T.S."/>
            <person name="Miller W."/>
            <person name="Eichler E.E."/>
            <person name="Bork P."/>
            <person name="Suyama M."/>
            <person name="Torrents D."/>
            <person name="Waterston R.H."/>
            <person name="Wilson R.K."/>
        </authorList>
    </citation>
    <scope>NUCLEOTIDE SEQUENCE [LARGE SCALE GENOMIC DNA]</scope>
</reference>
<reference key="4">
    <citation type="submission" date="2005-07" db="EMBL/GenBank/DDBJ databases">
        <authorList>
            <person name="Mural R.J."/>
            <person name="Istrail S."/>
            <person name="Sutton G.G."/>
            <person name="Florea L."/>
            <person name="Halpern A.L."/>
            <person name="Mobarry C.M."/>
            <person name="Lippert R."/>
            <person name="Walenz B."/>
            <person name="Shatkay H."/>
            <person name="Dew I."/>
            <person name="Miller J.R."/>
            <person name="Flanigan M.J."/>
            <person name="Edwards N.J."/>
            <person name="Bolanos R."/>
            <person name="Fasulo D."/>
            <person name="Halldorsson B.V."/>
            <person name="Hannenhalli S."/>
            <person name="Turner R."/>
            <person name="Yooseph S."/>
            <person name="Lu F."/>
            <person name="Nusskern D.R."/>
            <person name="Shue B.C."/>
            <person name="Zheng X.H."/>
            <person name="Zhong F."/>
            <person name="Delcher A.L."/>
            <person name="Huson D.H."/>
            <person name="Kravitz S.A."/>
            <person name="Mouchard L."/>
            <person name="Reinert K."/>
            <person name="Remington K.A."/>
            <person name="Clark A.G."/>
            <person name="Waterman M.S."/>
            <person name="Eichler E.E."/>
            <person name="Adams M.D."/>
            <person name="Hunkapiller M.W."/>
            <person name="Myers E.W."/>
            <person name="Venter J.C."/>
        </authorList>
    </citation>
    <scope>NUCLEOTIDE SEQUENCE [LARGE SCALE GENOMIC DNA]</scope>
</reference>
<reference key="5">
    <citation type="journal article" date="2004" name="Nat. Genet.">
        <title>Complete sequencing and characterization of 21,243 full-length human cDNAs.</title>
        <authorList>
            <person name="Ota T."/>
            <person name="Suzuki Y."/>
            <person name="Nishikawa T."/>
            <person name="Otsuki T."/>
            <person name="Sugiyama T."/>
            <person name="Irie R."/>
            <person name="Wakamatsu A."/>
            <person name="Hayashi K."/>
            <person name="Sato H."/>
            <person name="Nagai K."/>
            <person name="Kimura K."/>
            <person name="Makita H."/>
            <person name="Sekine M."/>
            <person name="Obayashi M."/>
            <person name="Nishi T."/>
            <person name="Shibahara T."/>
            <person name="Tanaka T."/>
            <person name="Ishii S."/>
            <person name="Yamamoto J."/>
            <person name="Saito K."/>
            <person name="Kawai Y."/>
            <person name="Isono Y."/>
            <person name="Nakamura Y."/>
            <person name="Nagahari K."/>
            <person name="Murakami K."/>
            <person name="Yasuda T."/>
            <person name="Iwayanagi T."/>
            <person name="Wagatsuma M."/>
            <person name="Shiratori A."/>
            <person name="Sudo H."/>
            <person name="Hosoiri T."/>
            <person name="Kaku Y."/>
            <person name="Kodaira H."/>
            <person name="Kondo H."/>
            <person name="Sugawara M."/>
            <person name="Takahashi M."/>
            <person name="Kanda K."/>
            <person name="Yokoi T."/>
            <person name="Furuya T."/>
            <person name="Kikkawa E."/>
            <person name="Omura Y."/>
            <person name="Abe K."/>
            <person name="Kamihara K."/>
            <person name="Katsuta N."/>
            <person name="Sato K."/>
            <person name="Tanikawa M."/>
            <person name="Yamazaki M."/>
            <person name="Ninomiya K."/>
            <person name="Ishibashi T."/>
            <person name="Yamashita H."/>
            <person name="Murakawa K."/>
            <person name="Fujimori K."/>
            <person name="Tanai H."/>
            <person name="Kimata M."/>
            <person name="Watanabe M."/>
            <person name="Hiraoka S."/>
            <person name="Chiba Y."/>
            <person name="Ishida S."/>
            <person name="Ono Y."/>
            <person name="Takiguchi S."/>
            <person name="Watanabe S."/>
            <person name="Yosida M."/>
            <person name="Hotuta T."/>
            <person name="Kusano J."/>
            <person name="Kanehori K."/>
            <person name="Takahashi-Fujii A."/>
            <person name="Hara H."/>
            <person name="Tanase T.-O."/>
            <person name="Nomura Y."/>
            <person name="Togiya S."/>
            <person name="Komai F."/>
            <person name="Hara R."/>
            <person name="Takeuchi K."/>
            <person name="Arita M."/>
            <person name="Imose N."/>
            <person name="Musashino K."/>
            <person name="Yuuki H."/>
            <person name="Oshima A."/>
            <person name="Sasaki N."/>
            <person name="Aotsuka S."/>
            <person name="Yoshikawa Y."/>
            <person name="Matsunawa H."/>
            <person name="Ichihara T."/>
            <person name="Shiohata N."/>
            <person name="Sano S."/>
            <person name="Moriya S."/>
            <person name="Momiyama H."/>
            <person name="Satoh N."/>
            <person name="Takami S."/>
            <person name="Terashima Y."/>
            <person name="Suzuki O."/>
            <person name="Nakagawa S."/>
            <person name="Senoh A."/>
            <person name="Mizoguchi H."/>
            <person name="Goto Y."/>
            <person name="Shimizu F."/>
            <person name="Wakebe H."/>
            <person name="Hishigaki H."/>
            <person name="Watanabe T."/>
            <person name="Sugiyama A."/>
            <person name="Takemoto M."/>
            <person name="Kawakami B."/>
            <person name="Yamazaki M."/>
            <person name="Watanabe K."/>
            <person name="Kumagai A."/>
            <person name="Itakura S."/>
            <person name="Fukuzumi Y."/>
            <person name="Fujimori Y."/>
            <person name="Komiyama M."/>
            <person name="Tashiro H."/>
            <person name="Tanigami A."/>
            <person name="Fujiwara T."/>
            <person name="Ono T."/>
            <person name="Yamada K."/>
            <person name="Fujii Y."/>
            <person name="Ozaki K."/>
            <person name="Hirao M."/>
            <person name="Ohmori Y."/>
            <person name="Kawabata A."/>
            <person name="Hikiji T."/>
            <person name="Kobatake N."/>
            <person name="Inagaki H."/>
            <person name="Ikema Y."/>
            <person name="Okamoto S."/>
            <person name="Okitani R."/>
            <person name="Kawakami T."/>
            <person name="Noguchi S."/>
            <person name="Itoh T."/>
            <person name="Shigeta K."/>
            <person name="Senba T."/>
            <person name="Matsumura K."/>
            <person name="Nakajima Y."/>
            <person name="Mizuno T."/>
            <person name="Morinaga M."/>
            <person name="Sasaki M."/>
            <person name="Togashi T."/>
            <person name="Oyama M."/>
            <person name="Hata H."/>
            <person name="Watanabe M."/>
            <person name="Komatsu T."/>
            <person name="Mizushima-Sugano J."/>
            <person name="Satoh T."/>
            <person name="Shirai Y."/>
            <person name="Takahashi Y."/>
            <person name="Nakagawa K."/>
            <person name="Okumura K."/>
            <person name="Nagase T."/>
            <person name="Nomura N."/>
            <person name="Kikuchi H."/>
            <person name="Masuho Y."/>
            <person name="Yamashita R."/>
            <person name="Nakai K."/>
            <person name="Yada T."/>
            <person name="Nakamura Y."/>
            <person name="Ohara O."/>
            <person name="Isogai T."/>
            <person name="Sugano S."/>
        </authorList>
    </citation>
    <scope>NUCLEOTIDE SEQUENCE [LARGE SCALE MRNA] OF 1-1126 (ISOFORM 1)</scope>
    <source>
        <tissue>Tongue</tissue>
    </source>
</reference>
<reference key="6">
    <citation type="journal article" date="1995" name="EMBO J.">
        <title>Mitotic HeLa cells contain a CENP-E-associated minus end-directed microtubule motor.</title>
        <authorList>
            <person name="Thrower D.A."/>
            <person name="Jordan M.A."/>
            <person name="Schaar B.T."/>
            <person name="Yen T.J."/>
            <person name="Wilson L."/>
        </authorList>
    </citation>
    <scope>FUNCTION</scope>
</reference>
<reference key="7">
    <citation type="journal article" date="1998" name="J. Cell Biol.">
        <title>Characterization of the kinetochore binding domain of CENP-E reveals interactions with the kinetochore proteins CENP-F and hBUBR1.</title>
        <authorList>
            <person name="Chan G.K.T."/>
            <person name="Schaar B.T."/>
            <person name="Yen T.J."/>
        </authorList>
    </citation>
    <scope>INTERACTION WITH CENPF AND BUB1B</scope>
    <scope>SUBCELLULAR LOCATION</scope>
</reference>
<reference key="8">
    <citation type="journal article" date="2000" name="J. Biol. Chem.">
        <title>Farnesyl transferase inhibitors block the farnesylation of CENP-E and CENP-F and alter the association of CENP-E with the microtubules.</title>
        <authorList>
            <person name="Ashar H.R."/>
            <person name="James L."/>
            <person name="Gray K."/>
            <person name="Carr D."/>
            <person name="Black S."/>
            <person name="Armstrong L."/>
            <person name="Bishop W.R."/>
            <person name="Kirschmeier P."/>
        </authorList>
    </citation>
    <scope>ISOPRENYLATION AT CYS-2698</scope>
</reference>
<reference key="9">
    <citation type="journal article" date="2004" name="EMBO J.">
        <title>Essential roles of KIF4 and its binding partner PRC1 in organized central spindle midzone formation.</title>
        <authorList>
            <person name="Kurasawa Y."/>
            <person name="Earnshaw W.C."/>
            <person name="Mochizuki Y."/>
            <person name="Dohmae N."/>
            <person name="Todokoro K."/>
        </authorList>
    </citation>
    <scope>INTERACTION WITH PRC1</scope>
</reference>
<reference key="10">
    <citation type="journal article" date="2007" name="J. Biol. Chem.">
        <title>Human NUF2 interacts with centromere-associated protein E and is essential for a stable spindle microtubule-kinetochore attachment.</title>
        <authorList>
            <person name="Liu D."/>
            <person name="Ding X."/>
            <person name="Du J."/>
            <person name="Cai X."/>
            <person name="Huang Y."/>
            <person name="Ward T."/>
            <person name="Shaw A."/>
            <person name="Yang Y."/>
            <person name="Hu R."/>
            <person name="Jin C."/>
            <person name="Yao X."/>
        </authorList>
    </citation>
    <scope>FUNCTION</scope>
    <scope>INTERACTION WITH NUF2</scope>
    <scope>SUBCELLULAR LOCATION</scope>
</reference>
<reference key="11">
    <citation type="journal article" date="2008" name="J. Biol. Chem.">
        <title>Septin 7 interacts with centromere-associated protein E and is required for its kinetochore localization.</title>
        <authorList>
            <person name="Zhu M."/>
            <person name="Wang F."/>
            <person name="Yan F."/>
            <person name="Yao P.Y."/>
            <person name="Du J."/>
            <person name="Gao X."/>
            <person name="Wang X."/>
            <person name="Wu Q."/>
            <person name="Ward T."/>
            <person name="Li J."/>
            <person name="Kioko S."/>
            <person name="Hu R."/>
            <person name="Xie W."/>
            <person name="Ding X."/>
            <person name="Yao X."/>
        </authorList>
    </citation>
    <scope>INTERACTION WITH SEPT7</scope>
    <scope>SUBCELLULAR LOCATION</scope>
</reference>
<reference key="12">
    <citation type="journal article" date="2008" name="Mol. Cell">
        <title>SUMO-2/3 modification and binding regulate the association of CENP-E with kinetochores and progression through mitosis.</title>
        <authorList>
            <person name="Zhang X.-D."/>
            <person name="Goeres J."/>
            <person name="Zhang H."/>
            <person name="Yen T.J."/>
            <person name="Porter A.C.G."/>
            <person name="Matunis M.J."/>
        </authorList>
    </citation>
    <scope>SUMOYLATION</scope>
    <scope>SUBCELLULAR LOCATION</scope>
</reference>
<reference key="13">
    <citation type="journal article" date="2008" name="Proc. Natl. Acad. Sci. U.S.A.">
        <title>A quantitative atlas of mitotic phosphorylation.</title>
        <authorList>
            <person name="Dephoure N."/>
            <person name="Zhou C."/>
            <person name="Villen J."/>
            <person name="Beausoleil S.A."/>
            <person name="Bakalarski C.E."/>
            <person name="Elledge S.J."/>
            <person name="Gygi S.P."/>
        </authorList>
    </citation>
    <scope>PHOSPHORYLATION [LARGE SCALE ANALYSIS] AT SER-2647</scope>
    <scope>IDENTIFICATION BY MASS SPECTROMETRY [LARGE SCALE ANALYSIS]</scope>
    <source>
        <tissue>Cervix carcinoma</tissue>
    </source>
</reference>
<reference key="14">
    <citation type="journal article" date="2009" name="Cell Cycle">
        <title>Defects in chromosome congression and mitotic progression in KIF18A-deficient cells are partly mediated through impaired functions of CENP-E.</title>
        <authorList>
            <person name="Huang Y."/>
            <person name="Yao Y."/>
            <person name="Xu H.-Z."/>
            <person name="Wang Z.-G."/>
            <person name="Lu L."/>
            <person name="Dai W."/>
        </authorList>
    </citation>
    <scope>INTERACTION WITH KIF18A AND BUB1B</scope>
</reference>
<reference key="15">
    <citation type="journal article" date="2011" name="BMC Syst. Biol.">
        <title>Initial characterization of the human central proteome.</title>
        <authorList>
            <person name="Burkard T.R."/>
            <person name="Planyavsky M."/>
            <person name="Kaupe I."/>
            <person name="Breitwieser F.P."/>
            <person name="Buerckstuemmer T."/>
            <person name="Bennett K.L."/>
            <person name="Superti-Furga G."/>
            <person name="Colinge J."/>
        </authorList>
    </citation>
    <scope>IDENTIFICATION BY MASS SPECTROMETRY [LARGE SCALE ANALYSIS]</scope>
</reference>
<reference key="16">
    <citation type="journal article" date="2012" name="J. Biol. Chem.">
        <title>CENP-E kinesin interacts with SKAP protein to orchestrate accurate chromosome segregation in mitosis.</title>
        <authorList>
            <person name="Huang Y."/>
            <person name="Wang W."/>
            <person name="Yao P."/>
            <person name="Wang X."/>
            <person name="Liu X."/>
            <person name="Zhuang X."/>
            <person name="Yan F."/>
            <person name="Zhou J."/>
            <person name="Du J."/>
            <person name="Ward T."/>
            <person name="Zou H."/>
            <person name="Zhang J."/>
            <person name="Fang G."/>
            <person name="Ding X."/>
            <person name="Dou Z."/>
            <person name="Yao X."/>
        </authorList>
    </citation>
    <scope>INTERACTION WITH SKAP</scope>
</reference>
<reference key="17">
    <citation type="journal article" date="2013" name="Curr. Biol.">
        <title>Lateral to end-on conversion of chromosome-microtubule attachment requires kinesins CENP-E and MCAK.</title>
        <authorList>
            <person name="Shrestha R.L."/>
            <person name="Draviam V.M."/>
        </authorList>
    </citation>
    <scope>FUNCTION</scope>
</reference>
<reference key="18">
    <citation type="journal article" date="2013" name="Curr. Biol.">
        <authorList>
            <person name="Shrestha R.L."/>
            <person name="Draviam V.M."/>
        </authorList>
    </citation>
    <scope>ERRATUM OF PUBMED:23891108</scope>
</reference>
<reference key="19">
    <citation type="journal article" date="2013" name="J. Proteome Res.">
        <title>Toward a comprehensive characterization of a human cancer cell phosphoproteome.</title>
        <authorList>
            <person name="Zhou H."/>
            <person name="Di Palma S."/>
            <person name="Preisinger C."/>
            <person name="Peng M."/>
            <person name="Polat A.N."/>
            <person name="Heck A.J."/>
            <person name="Mohammed S."/>
        </authorList>
    </citation>
    <scope>PHOSPHORYLATION [LARGE SCALE ANALYSIS] AT SER-611; SER-2083; SER-2389; SER-2639 AND SER-2651</scope>
    <scope>IDENTIFICATION BY MASS SPECTROMETRY [LARGE SCALE ANALYSIS]</scope>
    <source>
        <tissue>Cervix carcinoma</tissue>
        <tissue>Erythroleukemia</tissue>
    </source>
</reference>
<reference key="20">
    <citation type="journal article" date="2013" name="Nat. Cell Biol.">
        <title>Kinetochore kinesin CENP-E is a processive bi-directional tracker of dynamic microtubule tips.</title>
        <authorList>
            <person name="Gudimchuk N."/>
            <person name="Vitre B."/>
            <person name="Kim Y."/>
            <person name="Kiyatkin A."/>
            <person name="Cleveland D.W."/>
            <person name="Ataullakhanov F.I."/>
            <person name="Grishchuk E.L."/>
        </authorList>
    </citation>
    <scope>FUNCTION</scope>
</reference>
<reference key="21">
    <citation type="journal article" date="2014" name="Hum. Genet.">
        <title>Mutations in CENPE define a novel kinetochore-centromeric mechanism for microcephalic primordial dwarfism.</title>
        <authorList>
            <person name="Mirzaa G.M."/>
            <person name="Vitre B."/>
            <person name="Carpenter G."/>
            <person name="Abramowicz I."/>
            <person name="Gleeson J.G."/>
            <person name="Paciorkowski A.R."/>
            <person name="Cleveland D.W."/>
            <person name="Dobyns W.B."/>
            <person name="O'Driscoll M."/>
        </authorList>
    </citation>
    <scope>INVOLVEMENT IN MCPH13</scope>
    <scope>VARIANTS MCPH13 ASN-933 AND GLU-1355</scope>
    <scope>CHARACTERIZATION OF VARIANTS MCPH13 ASN-933 AND GLU-1355</scope>
    <scope>VARIANTS LEU-1535 AND MET-2090</scope>
</reference>
<reference key="22">
    <citation type="journal article" date="2015" name="Cell Rep.">
        <title>CTCF recruits centromeric protein CENP-E to the pericentromeric/centromeric regions of chromosomes through unusual CTCF-binding sites.</title>
        <authorList>
            <person name="Xiao T."/>
            <person name="Wongtrakoongate P."/>
            <person name="Trainor C."/>
            <person name="Felsenfeld G."/>
        </authorList>
    </citation>
    <scope>INTERACTION WITH CTCF</scope>
    <scope>SUBCELLULAR LOCATION</scope>
</reference>
<reference key="23">
    <citation type="journal article" date="2015" name="J. Cell Biol.">
        <title>TRAMM/TrappC12 plays a role in chromosome congression, kinetochore stability, and CENP-E recruitment.</title>
        <authorList>
            <person name="Milev M.P."/>
            <person name="Hasaj B."/>
            <person name="Saint-Dic D."/>
            <person name="Snounou S."/>
            <person name="Zhao Q."/>
            <person name="Sacher M."/>
        </authorList>
    </citation>
    <scope>INTERACTION WITH TRAPPC12</scope>
    <scope>SUBCELLULAR LOCATION</scope>
</reference>
<reference key="24">
    <citation type="journal article" date="2015" name="J. Cell Sci.">
        <title>Chromosome congression is promoted by CENP-Q- and CENP-E-dependent pathways.</title>
        <authorList>
            <person name="Bancroft J."/>
            <person name="Auckland P."/>
            <person name="Samora C.P."/>
            <person name="McAinsh A.D."/>
        </authorList>
    </citation>
    <scope>FUNCTION</scope>
    <scope>SUBCELLULAR LOCATION</scope>
</reference>
<reference key="25">
    <citation type="journal article" date="2015" name="Nat. Commun.">
        <title>Chromokinesin Kid and kinetochore kinesin CENP-E differentially support chromosome congression without end-on attachment to microtubules.</title>
        <authorList>
            <person name="Iemura K."/>
            <person name="Tanaka K."/>
        </authorList>
    </citation>
    <scope>FUNCTION</scope>
</reference>
<reference key="26">
    <citation type="journal article" date="2015" name="Science">
        <title>Mitosis. Microtubule detyrosination guides chromosomes during mitosis.</title>
        <authorList>
            <person name="Barisic M."/>
            <person name="Silva e Sousa R."/>
            <person name="Tripathy S.K."/>
            <person name="Magiera M.M."/>
            <person name="Zaytsev A.V."/>
            <person name="Pereira A.L."/>
            <person name="Janke C."/>
            <person name="Grishchuk E.L."/>
            <person name="Maiato H."/>
        </authorList>
    </citation>
    <scope>FUNCTION</scope>
</reference>
<reference key="27">
    <citation type="journal article" date="2004" name="J. Mol. Biol.">
        <title>Crystal structure of the motor domain of the human kinetochore protein CENP-E.</title>
        <authorList>
            <person name="Garcia-Saez I."/>
            <person name="Yen T."/>
            <person name="Wade R.H."/>
            <person name="Kozielski F."/>
        </authorList>
    </citation>
    <scope>X-RAY CRYSTALLOGRAPHY (2.5 ANGSTROMS) OF 2-342 IN COMPLEX WITH ADP</scope>
    <scope>PROTEIN SEQUENCE OF 2-7</scope>
    <scope>IDENTIFICATION BY MASS SPECTROMETRY</scope>
    <scope>SUBUNIT</scope>
</reference>
<organism>
    <name type="scientific">Homo sapiens</name>
    <name type="common">Human</name>
    <dbReference type="NCBI Taxonomy" id="9606"/>
    <lineage>
        <taxon>Eukaryota</taxon>
        <taxon>Metazoa</taxon>
        <taxon>Chordata</taxon>
        <taxon>Craniata</taxon>
        <taxon>Vertebrata</taxon>
        <taxon>Euteleostomi</taxon>
        <taxon>Mammalia</taxon>
        <taxon>Eutheria</taxon>
        <taxon>Euarchontoglires</taxon>
        <taxon>Primates</taxon>
        <taxon>Haplorrhini</taxon>
        <taxon>Catarrhini</taxon>
        <taxon>Hominidae</taxon>
        <taxon>Homo</taxon>
    </lineage>
</organism>
<comment type="function">
    <text evidence="2 10 15 16 18 19 20 23">Microtubule plus-end-directed kinetochore motor which plays an important role in chromosome congression, microtubule-kinetochore conjugation and spindle assembly checkpoint activation. Drives chromosome congression (alignment of chromosomes at the spindle equator resulting in the formation of the metaphase plate) by mediating the lateral sliding of polar chromosomes along spindle microtubules towards the spindle equator and by aiding the establishment and maintenance of connections between kinetochores and spindle microtubules (PubMed:23891108, PubMed:25395579, PubMed:7889940). The transport of pole-proximal chromosomes towards the spindle equator is favored by microtubule tracks that are detyrosinated (PubMed:25908662). Acts as a processive bi-directional tracker of dynamic microtubule tips; after chromosomes have congressed, continues to play an active role at kinetochores, enhancing their links with dynamic microtubule ends (PubMed:23955301). Suppresses chromosome congression in NDC80-depleted cells and contributes positively to congression only when microtubules are stabilized (PubMed:25743205). Plays an important role in the formation of stable attachments between kinetochores and spindle microtubules (PubMed:17535814) The stabilization of kinetochore-microtubule attachment also requires CENPE-dependent localization of other proteins to the kinetochore including BUB1B, MAD1 and MAD2. Plays a role in spindle assembly checkpoint activation (SAC) via its interaction with BUB1B resulting in the activation of its kinase activity, which is important for activating SAC. Necessary for the mitotic checkpoint signal at individual kinetochores to prevent aneuploidy due to single chromosome loss (By similarity).</text>
</comment>
<comment type="subunit">
    <text evidence="8 9 10 12 13 14 18 21 24">Monomer (PubMed:15236970). Interacts with CENPF (PubMed:9763420). Interacts with BUB1B (PubMed:19625775, PubMed:9763420). Interacts with SEPT7 (PubMed:18460473). Interacts with KIF18A (PubMed:19625775). Interacts with PRC1 (PubMed:15297875). Interacts with NUF2; this interaction determines kinetochore localization (PubMed:17535814). Interacts with SKAP; this interaction greatly favors SKAP binding to microtubules (PubMed:22110139). Interacts with TRAPPC12 (PubMed:25918224). Interacts with CTCF (PubMed:25395579).</text>
</comment>
<comment type="interaction">
    <interactant intactId="EBI-1375040">
        <id>Q02224</id>
    </interactant>
    <interactant intactId="EBI-1001438">
        <id>O60566</id>
        <label>BUB1B</label>
    </interactant>
    <organismsDiffer>false</organismsDiffer>
    <experiments>4</experiments>
</comment>
<comment type="interaction">
    <interactant intactId="EBI-1375040">
        <id>Q02224</id>
    </interactant>
    <interactant intactId="EBI-742610">
        <id>Q9Y6D9</id>
        <label>MAD1L1</label>
    </interactant>
    <organismsDiffer>false</organismsDiffer>
    <experiments>3</experiments>
</comment>
<comment type="interaction">
    <interactant intactId="EBI-1375040">
        <id>Q02224</id>
    </interactant>
    <interactant intactId="EBI-724102">
        <id>Q9BZD4</id>
        <label>NUF2</label>
    </interactant>
    <organismsDiffer>false</organismsDiffer>
    <experiments>9</experiments>
</comment>
<comment type="subcellular location">
    <subcellularLocation>
        <location evidence="10 11 12 18 21 24">Chromosome</location>
        <location evidence="10 11 12 18 21 24">Centromere</location>
        <location evidence="10 11 12 18 21 24">Kinetochore</location>
    </subcellularLocation>
    <subcellularLocation>
        <location evidence="24">Cytoplasm</location>
        <location evidence="24">Cytoskeleton</location>
        <location evidence="24">Spindle</location>
    </subcellularLocation>
    <subcellularLocation>
        <location evidence="22">Chromosome</location>
        <location evidence="22">Centromere</location>
    </subcellularLocation>
    <text evidence="2 12 18 21 22">Associates with kinetochores during congression (as early as prometaphase), relocates to the spindle midzone at anaphase, and is quantitatively discarded at the end of the cell division (By similarity). Recruited to the kinetochore in a SEPT7, CENPQ and TRAPPC12-dependent manner (PubMed:18460473, PubMed:25395579, PubMed:25918224). Recruited to the pericentromeric/centromeric regions of the chromosome in a CTCF-dependent manner (PubMed:26321640).</text>
</comment>
<comment type="alternative products">
    <event type="alternative splicing"/>
    <isoform>
        <id>Q02224-1</id>
        <name>1</name>
        <sequence type="displayed"/>
    </isoform>
    <isoform>
        <id>Q02224-3</id>
        <name>3</name>
        <sequence type="described" ref="VSP_028820 VSP_028821"/>
    </isoform>
</comment>
<comment type="domain">
    <text evidence="1">The protein is composed of a N-terminal kinesin-motor domain involved in the chromosome movements, a long coil-coiled region involved in the homodimerization and an inhibitory C-tail involved in autoinhibition of the N-terminal catalytic part.</text>
</comment>
<comment type="PTM">
    <text evidence="1">The C-terminal inhibitory domain is phosphorylated. Phosphorylation relieves autoinhibition of the kinetochore motor (By similarity).</text>
</comment>
<comment type="PTM">
    <text evidence="11">Sumoylated with SUMO2 and SUMO3. The sumoylation mediates the association to the kinetochore.</text>
</comment>
<comment type="disease" evidence="17">
    <disease id="DI-04269">
        <name>Microcephaly 13, primary, autosomal recessive</name>
        <acronym>MCPH13</acronym>
        <description>A form of microcephaly, a disease defined as a head circumference more than 3 standard deviations below the age-related mean. Brain weight is markedly reduced and the cerebral cortex is disproportionately small.</description>
        <dbReference type="MIM" id="616051"/>
    </disease>
    <text>The disease is caused by variants affecting the gene represented in this entry.</text>
</comment>
<comment type="similarity">
    <text evidence="4">Belongs to the TRAFAC class myosin-kinesin ATPase superfamily. Kinesin family.</text>
</comment>
<comment type="sequence caution" evidence="27">
    <conflict type="erroneous initiation">
        <sequence resource="EMBL-CDS" id="BAE06078"/>
    </conflict>
    <text>Extended N-terminus.</text>
</comment>
<comment type="sequence caution" evidence="27">
    <conflict type="miscellaneous discrepancy">
        <sequence resource="EMBL-CDS" id="CAA78727"/>
    </conflict>
    <text>Aberrant splicing.</text>
</comment>
<gene>
    <name type="primary">CENPE</name>
</gene>
<protein>
    <recommendedName>
        <fullName>Centromere-associated protein E</fullName>
    </recommendedName>
    <alternativeName>
        <fullName>Centromere protein E</fullName>
        <shortName>CENP-E</shortName>
    </alternativeName>
    <alternativeName>
        <fullName evidence="25">Kinesin-7</fullName>
    </alternativeName>
    <alternativeName>
        <fullName>Kinesin-related protein CENPE</fullName>
    </alternativeName>
</protein>
<feature type="chain" id="PRO_0000125436" description="Centromere-associated protein E">
    <location>
        <begin position="1"/>
        <end position="2698"/>
    </location>
</feature>
<feature type="propeptide" id="PRO_0000396742" description="Removed in mature form" evidence="27">
    <location>
        <begin position="2699"/>
        <end position="2701"/>
    </location>
</feature>
<feature type="domain" description="Kinesin motor" evidence="4">
    <location>
        <begin position="6"/>
        <end position="329"/>
    </location>
</feature>
<feature type="region of interest" description="Kinetochore-binding domain">
    <location>
        <begin position="2126"/>
        <end position="2476"/>
    </location>
</feature>
<feature type="region of interest" description="Disordered" evidence="5">
    <location>
        <begin position="2355"/>
        <end position="2376"/>
    </location>
</feature>
<feature type="region of interest" description="Disordered" evidence="5">
    <location>
        <begin position="2508"/>
        <end position="2533"/>
    </location>
</feature>
<feature type="region of interest" description="Globular autoinhibitory domain" evidence="1">
    <location>
        <begin position="2510"/>
        <end position="2698"/>
    </location>
</feature>
<feature type="region of interest" description="Disordered" evidence="5">
    <location>
        <begin position="2588"/>
        <end position="2701"/>
    </location>
</feature>
<feature type="coiled-coil region" evidence="3">
    <location>
        <begin position="336"/>
        <end position="2590"/>
    </location>
</feature>
<feature type="compositionally biased region" description="Polar residues" evidence="5">
    <location>
        <begin position="2508"/>
        <end position="2527"/>
    </location>
</feature>
<feature type="compositionally biased region" description="Basic and acidic residues" evidence="5">
    <location>
        <begin position="2588"/>
        <end position="2600"/>
    </location>
</feature>
<feature type="compositionally biased region" description="Polar residues" evidence="5">
    <location>
        <begin position="2601"/>
        <end position="2625"/>
    </location>
</feature>
<feature type="compositionally biased region" description="Basic and acidic residues" evidence="5">
    <location>
        <begin position="2626"/>
        <end position="2640"/>
    </location>
</feature>
<feature type="binding site">
    <location>
        <begin position="86"/>
        <end position="93"/>
    </location>
    <ligand>
        <name>ATP</name>
        <dbReference type="ChEBI" id="CHEBI:30616"/>
    </ligand>
</feature>
<feature type="modified residue" description="Phosphoserine" evidence="29">
    <location>
        <position position="611"/>
    </location>
</feature>
<feature type="modified residue" description="Phosphoserine" evidence="29">
    <location>
        <position position="2083"/>
    </location>
</feature>
<feature type="modified residue" description="Phosphoserine" evidence="29">
    <location>
        <position position="2389"/>
    </location>
</feature>
<feature type="modified residue" description="Phosphoserine" evidence="29">
    <location>
        <position position="2639"/>
    </location>
</feature>
<feature type="modified residue" description="Phosphoserine" evidence="28">
    <location>
        <position position="2647"/>
    </location>
</feature>
<feature type="modified residue" description="Phosphoserine" evidence="29">
    <location>
        <position position="2651"/>
    </location>
</feature>
<feature type="modified residue" description="Cysteine methyl ester" evidence="27">
    <location>
        <position position="2698"/>
    </location>
</feature>
<feature type="lipid moiety-binding region" description="S-farnesyl cysteine" evidence="6">
    <location>
        <position position="2698"/>
    </location>
</feature>
<feature type="splice variant" id="VSP_028820" description="In isoform 3." evidence="26">
    <location>
        <begin position="549"/>
        <end position="573"/>
    </location>
</feature>
<feature type="splice variant" id="VSP_028821" description="In isoform 3." evidence="26">
    <original>IQELQKKELQLLRVKEDVNMSHKKINEMEQLKKQFEAQNLSMQSVRMDNFQLTKKLHESLEEIRIVAKERDELRRIKESLKMERDQFIATLREMIAR</original>
    <variation>Q</variation>
    <location>
        <begin position="1972"/>
        <end position="2068"/>
    </location>
</feature>
<feature type="sequence variant" id="VAR_072429" description="In MCPH13; results in defective mitotic spindle formation and chromosome segregation; results in delayed mitotic progression; dbSNP:rs144716013." evidence="17">
    <original>D</original>
    <variation>N</variation>
    <location>
        <position position="933"/>
    </location>
</feature>
<feature type="sequence variant" id="VAR_072430" description="In MCPH13; results in defective mitotic spindle formation and chromosome segregation; results in delayed mitotic progression; dbSNP:rs141488085." evidence="17">
    <original>K</original>
    <variation>E</variation>
    <location>
        <position position="1355"/>
    </location>
</feature>
<feature type="sequence variant" id="VAR_049689" description="In dbSNP:rs2615542." evidence="7 17">
    <original>F</original>
    <variation>L</variation>
    <location>
        <position position="1535"/>
    </location>
</feature>
<feature type="sequence variant" id="VAR_049690" description="In dbSNP:rs35100664.">
    <original>S</original>
    <variation>R</variation>
    <location>
        <position position="1581"/>
    </location>
</feature>
<feature type="sequence variant" id="VAR_059370" description="In dbSNP:rs1381657.">
    <original>S</original>
    <variation>T</variation>
    <location>
        <position position="1911"/>
    </location>
</feature>
<feature type="sequence variant" id="VAR_049691" description="In dbSNP:rs2306106.">
    <original>E</original>
    <variation>D</variation>
    <location>
        <position position="1925"/>
    </location>
</feature>
<feature type="sequence variant" id="VAR_049692" description="In dbSNP:rs2243682." evidence="7 17">
    <original>T</original>
    <variation>M</variation>
    <location>
        <position position="2090"/>
    </location>
</feature>
<feature type="sequence conflict" description="In Ref. 5; BAF83051." evidence="27" ref="5">
    <original>R</original>
    <variation>H</variation>
    <location>
        <position position="51"/>
    </location>
</feature>
<feature type="sequence conflict" description="In Ref. 1; CAA78727." evidence="27" ref="1">
    <original>A</original>
    <variation>P</variation>
    <location>
        <position position="300"/>
    </location>
</feature>
<feature type="sequence conflict" description="In Ref. 2; BAE06078." evidence="27" ref="2">
    <original>F</original>
    <variation>S</variation>
    <location>
        <position position="440"/>
    </location>
</feature>
<feature type="sequence conflict" description="In Ref. 1; CAA78727." evidence="27" ref="1">
    <original>A</original>
    <variation>R</variation>
    <location>
        <position position="566"/>
    </location>
</feature>
<feature type="sequence conflict" description="In Ref. 1; CAA78727." evidence="27" ref="1">
    <original>T</original>
    <variation>P</variation>
    <location>
        <position position="902"/>
    </location>
</feature>
<feature type="sequence conflict" description="In Ref. 1; CAA78727." evidence="27" ref="1">
    <original>E</original>
    <variation>K</variation>
    <location>
        <position position="1297"/>
    </location>
</feature>
<feature type="sequence conflict" description="In Ref. 1; CAA78727." evidence="27" ref="1">
    <original>K</original>
    <variation>N</variation>
    <location>
        <position position="1546"/>
    </location>
</feature>
<feature type="sequence conflict" description="In Ref. 1; CAA78727." evidence="27" ref="1">
    <original>K</original>
    <variation>E</variation>
    <location>
        <position position="1876"/>
    </location>
</feature>
<feature type="sequence conflict" description="In Ref. 1; CAA78727." evidence="27" ref="1">
    <original>AQNLSMQSVR</original>
    <variation>PNYLCKCE</variation>
    <location>
        <begin position="2008"/>
        <end position="2017"/>
    </location>
</feature>
<feature type="sequence conflict" description="In Ref. 1; CAA78727." evidence="27" ref="1">
    <location>
        <begin position="2131"/>
        <end position="2166"/>
    </location>
</feature>
<feature type="sequence conflict" description="In Ref. 1; CAA78727." evidence="27" ref="1">
    <original>S</original>
    <variation>C</variation>
    <location>
        <position position="2190"/>
    </location>
</feature>
<feature type="strand" evidence="33">
    <location>
        <begin position="7"/>
        <end position="13"/>
    </location>
</feature>
<feature type="helix" evidence="33">
    <location>
        <begin position="18"/>
        <end position="21"/>
    </location>
</feature>
<feature type="turn" evidence="30">
    <location>
        <begin position="22"/>
        <end position="25"/>
    </location>
</feature>
<feature type="strand" evidence="33">
    <location>
        <begin position="31"/>
        <end position="33"/>
    </location>
</feature>
<feature type="strand" evidence="33">
    <location>
        <begin position="35"/>
        <end position="40"/>
    </location>
</feature>
<feature type="strand" evidence="33">
    <location>
        <begin position="46"/>
        <end position="48"/>
    </location>
</feature>
<feature type="strand" evidence="33">
    <location>
        <begin position="50"/>
        <end position="53"/>
    </location>
</feature>
<feature type="helix" evidence="33">
    <location>
        <begin position="59"/>
        <end position="66"/>
    </location>
</feature>
<feature type="helix" evidence="33">
    <location>
        <begin position="68"/>
        <end position="75"/>
    </location>
</feature>
<feature type="strand" evidence="33">
    <location>
        <begin position="80"/>
        <end position="85"/>
    </location>
</feature>
<feature type="helix" evidence="33">
    <location>
        <begin position="92"/>
        <end position="96"/>
    </location>
</feature>
<feature type="strand" evidence="30">
    <location>
        <begin position="100"/>
        <end position="103"/>
    </location>
</feature>
<feature type="helix" evidence="33">
    <location>
        <begin position="105"/>
        <end position="117"/>
    </location>
</feature>
<feature type="strand" evidence="33">
    <location>
        <begin position="123"/>
        <end position="135"/>
    </location>
</feature>
<feature type="strand" evidence="33">
    <location>
        <begin position="138"/>
        <end position="144"/>
    </location>
</feature>
<feature type="helix" evidence="33">
    <location>
        <begin position="146"/>
        <end position="148"/>
    </location>
</feature>
<feature type="strand" evidence="33">
    <location>
        <begin position="154"/>
        <end position="156"/>
    </location>
</feature>
<feature type="turn" evidence="30">
    <location>
        <begin position="157"/>
        <end position="159"/>
    </location>
</feature>
<feature type="strand" evidence="33">
    <location>
        <begin position="162"/>
        <end position="164"/>
    </location>
</feature>
<feature type="strand" evidence="33">
    <location>
        <begin position="170"/>
        <end position="174"/>
    </location>
</feature>
<feature type="helix" evidence="33">
    <location>
        <begin position="175"/>
        <end position="188"/>
    </location>
</feature>
<feature type="strand" evidence="30">
    <location>
        <begin position="190"/>
        <end position="197"/>
    </location>
</feature>
<feature type="helix" evidence="32">
    <location>
        <begin position="199"/>
        <end position="201"/>
    </location>
</feature>
<feature type="strand" evidence="33">
    <location>
        <begin position="203"/>
        <end position="215"/>
    </location>
</feature>
<feature type="strand" evidence="33">
    <location>
        <begin position="226"/>
        <end position="235"/>
    </location>
</feature>
<feature type="helix" evidence="32">
    <location>
        <begin position="239"/>
        <end position="241"/>
    </location>
</feature>
<feature type="helix" evidence="33">
    <location>
        <begin position="242"/>
        <end position="245"/>
    </location>
</feature>
<feature type="helix" evidence="33">
    <location>
        <begin position="249"/>
        <end position="274"/>
    </location>
</feature>
<feature type="helix" evidence="32">
    <location>
        <begin position="278"/>
        <end position="280"/>
    </location>
</feature>
<feature type="helix" evidence="33">
    <location>
        <begin position="283"/>
        <end position="285"/>
    </location>
</feature>
<feature type="helix" evidence="33">
    <location>
        <begin position="287"/>
        <end position="291"/>
    </location>
</feature>
<feature type="helix" evidence="33">
    <location>
        <begin position="293"/>
        <end position="295"/>
    </location>
</feature>
<feature type="strand" evidence="33">
    <location>
        <begin position="298"/>
        <end position="308"/>
    </location>
</feature>
<feature type="helix" evidence="33">
    <location>
        <begin position="314"/>
        <end position="326"/>
    </location>
</feature>
<feature type="helix" evidence="31">
    <location>
        <begin position="341"/>
        <end position="376"/>
    </location>
</feature>
<feature type="helix" evidence="34">
    <location>
        <begin position="2455"/>
        <end position="2507"/>
    </location>
</feature>
<name>CENPE_HUMAN</name>
<accession>Q02224</accession>
<accession>A6NKY9</accession>
<accession>A8K2U7</accession>
<accession>Q4LE75</accession>